<dbReference type="EC" id="2.7.7.18" evidence="1"/>
<dbReference type="EMBL" id="CP001359">
    <property type="protein sequence ID" value="ACL64893.1"/>
    <property type="molecule type" value="Genomic_DNA"/>
</dbReference>
<dbReference type="RefSeq" id="WP_012632829.1">
    <property type="nucleotide sequence ID" value="NC_011891.1"/>
</dbReference>
<dbReference type="SMR" id="B8J538"/>
<dbReference type="KEGG" id="acp:A2cp1_1549"/>
<dbReference type="HOGENOM" id="CLU_069765_3_1_7"/>
<dbReference type="UniPathway" id="UPA00253">
    <property type="reaction ID" value="UER00332"/>
</dbReference>
<dbReference type="Proteomes" id="UP000007089">
    <property type="component" value="Chromosome"/>
</dbReference>
<dbReference type="GO" id="GO:0005524">
    <property type="term" value="F:ATP binding"/>
    <property type="evidence" value="ECO:0007669"/>
    <property type="project" value="UniProtKB-KW"/>
</dbReference>
<dbReference type="GO" id="GO:0004515">
    <property type="term" value="F:nicotinate-nucleotide adenylyltransferase activity"/>
    <property type="evidence" value="ECO:0007669"/>
    <property type="project" value="UniProtKB-UniRule"/>
</dbReference>
<dbReference type="GO" id="GO:0009435">
    <property type="term" value="P:NAD biosynthetic process"/>
    <property type="evidence" value="ECO:0007669"/>
    <property type="project" value="UniProtKB-UniRule"/>
</dbReference>
<dbReference type="CDD" id="cd02165">
    <property type="entry name" value="NMNAT"/>
    <property type="match status" value="1"/>
</dbReference>
<dbReference type="Gene3D" id="3.40.50.620">
    <property type="entry name" value="HUPs"/>
    <property type="match status" value="1"/>
</dbReference>
<dbReference type="HAMAP" id="MF_00244">
    <property type="entry name" value="NaMN_adenylyltr"/>
    <property type="match status" value="1"/>
</dbReference>
<dbReference type="InterPro" id="IPR004821">
    <property type="entry name" value="Cyt_trans-like"/>
</dbReference>
<dbReference type="InterPro" id="IPR005248">
    <property type="entry name" value="NadD/NMNAT"/>
</dbReference>
<dbReference type="InterPro" id="IPR014729">
    <property type="entry name" value="Rossmann-like_a/b/a_fold"/>
</dbReference>
<dbReference type="NCBIfam" id="TIGR00482">
    <property type="entry name" value="nicotinate (nicotinamide) nucleotide adenylyltransferase"/>
    <property type="match status" value="1"/>
</dbReference>
<dbReference type="PANTHER" id="PTHR39321">
    <property type="entry name" value="NICOTINATE-NUCLEOTIDE ADENYLYLTRANSFERASE-RELATED"/>
    <property type="match status" value="1"/>
</dbReference>
<dbReference type="PANTHER" id="PTHR39321:SF3">
    <property type="entry name" value="PHOSPHOPANTETHEINE ADENYLYLTRANSFERASE"/>
    <property type="match status" value="1"/>
</dbReference>
<dbReference type="Pfam" id="PF01467">
    <property type="entry name" value="CTP_transf_like"/>
    <property type="match status" value="1"/>
</dbReference>
<dbReference type="SUPFAM" id="SSF52374">
    <property type="entry name" value="Nucleotidylyl transferase"/>
    <property type="match status" value="1"/>
</dbReference>
<accession>B8J538</accession>
<reference key="1">
    <citation type="submission" date="2009-01" db="EMBL/GenBank/DDBJ databases">
        <title>Complete sequence of Anaeromyxobacter dehalogenans 2CP-1.</title>
        <authorList>
            <person name="Lucas S."/>
            <person name="Copeland A."/>
            <person name="Lapidus A."/>
            <person name="Glavina del Rio T."/>
            <person name="Dalin E."/>
            <person name="Tice H."/>
            <person name="Bruce D."/>
            <person name="Goodwin L."/>
            <person name="Pitluck S."/>
            <person name="Saunders E."/>
            <person name="Brettin T."/>
            <person name="Detter J.C."/>
            <person name="Han C."/>
            <person name="Larimer F."/>
            <person name="Land M."/>
            <person name="Hauser L."/>
            <person name="Kyrpides N."/>
            <person name="Ovchinnikova G."/>
            <person name="Beliaev A.S."/>
            <person name="Richardson P."/>
        </authorList>
    </citation>
    <scope>NUCLEOTIDE SEQUENCE [LARGE SCALE GENOMIC DNA]</scope>
    <source>
        <strain>2CP-1 / ATCC BAA-258</strain>
    </source>
</reference>
<keyword id="KW-0067">ATP-binding</keyword>
<keyword id="KW-0520">NAD</keyword>
<keyword id="KW-0547">Nucleotide-binding</keyword>
<keyword id="KW-0548">Nucleotidyltransferase</keyword>
<keyword id="KW-0662">Pyridine nucleotide biosynthesis</keyword>
<keyword id="KW-0808">Transferase</keyword>
<protein>
    <recommendedName>
        <fullName evidence="1">Probable nicotinate-nucleotide adenylyltransferase</fullName>
        <ecNumber evidence="1">2.7.7.18</ecNumber>
    </recommendedName>
    <alternativeName>
        <fullName evidence="1">Deamido-NAD(+) diphosphorylase</fullName>
    </alternativeName>
    <alternativeName>
        <fullName evidence="1">Deamido-NAD(+) pyrophosphorylase</fullName>
    </alternativeName>
    <alternativeName>
        <fullName evidence="1">Nicotinate mononucleotide adenylyltransferase</fullName>
        <shortName evidence="1">NaMN adenylyltransferase</shortName>
    </alternativeName>
</protein>
<feature type="chain" id="PRO_1000125334" description="Probable nicotinate-nucleotide adenylyltransferase">
    <location>
        <begin position="1"/>
        <end position="187"/>
    </location>
</feature>
<organism>
    <name type="scientific">Anaeromyxobacter dehalogenans (strain 2CP-1 / ATCC BAA-258)</name>
    <dbReference type="NCBI Taxonomy" id="455488"/>
    <lineage>
        <taxon>Bacteria</taxon>
        <taxon>Pseudomonadati</taxon>
        <taxon>Myxococcota</taxon>
        <taxon>Myxococcia</taxon>
        <taxon>Myxococcales</taxon>
        <taxon>Cystobacterineae</taxon>
        <taxon>Anaeromyxobacteraceae</taxon>
        <taxon>Anaeromyxobacter</taxon>
    </lineage>
</organism>
<sequence>MSGGREIALLGGSFNPPHVAHLMAAWWALATQGVSEVWLLPTFRHPFGKDLAPFEDRLEMCRLAARALRGVHVCGAEAELAADPLVGKTARTLEHLAAKHPDQRFALIVGADILAETAKWYRWDRVQALARIIVVGRQGHPPVPGAPDLPAISSTEIRARLARGEDVRGLVPEKVLRYVEEKGLYRG</sequence>
<evidence type="ECO:0000255" key="1">
    <source>
        <dbReference type="HAMAP-Rule" id="MF_00244"/>
    </source>
</evidence>
<name>NADD_ANAD2</name>
<proteinExistence type="inferred from homology"/>
<comment type="function">
    <text evidence="1">Catalyzes the reversible adenylation of nicotinate mononucleotide (NaMN) to nicotinic acid adenine dinucleotide (NaAD).</text>
</comment>
<comment type="catalytic activity">
    <reaction evidence="1">
        <text>nicotinate beta-D-ribonucleotide + ATP + H(+) = deamido-NAD(+) + diphosphate</text>
        <dbReference type="Rhea" id="RHEA:22860"/>
        <dbReference type="ChEBI" id="CHEBI:15378"/>
        <dbReference type="ChEBI" id="CHEBI:30616"/>
        <dbReference type="ChEBI" id="CHEBI:33019"/>
        <dbReference type="ChEBI" id="CHEBI:57502"/>
        <dbReference type="ChEBI" id="CHEBI:58437"/>
        <dbReference type="EC" id="2.7.7.18"/>
    </reaction>
</comment>
<comment type="pathway">
    <text evidence="1">Cofactor biosynthesis; NAD(+) biosynthesis; deamido-NAD(+) from nicotinate D-ribonucleotide: step 1/1.</text>
</comment>
<comment type="similarity">
    <text evidence="1">Belongs to the NadD family.</text>
</comment>
<gene>
    <name evidence="1" type="primary">nadD</name>
    <name type="ordered locus">A2cp1_1549</name>
</gene>